<accession>Q3L6X7</accession>
<keyword id="KW-0249">Electron transport</keyword>
<keyword id="KW-0349">Heme</keyword>
<keyword id="KW-0408">Iron</keyword>
<keyword id="KW-0472">Membrane</keyword>
<keyword id="KW-0479">Metal-binding</keyword>
<keyword id="KW-0496">Mitochondrion</keyword>
<keyword id="KW-0999">Mitochondrion inner membrane</keyword>
<keyword id="KW-0679">Respiratory chain</keyword>
<keyword id="KW-0812">Transmembrane</keyword>
<keyword id="KW-1133">Transmembrane helix</keyword>
<keyword id="KW-0813">Transport</keyword>
<keyword id="KW-0830">Ubiquinone</keyword>
<comment type="function">
    <text evidence="2">Component of the ubiquinol-cytochrome c reductase complex (complex III or cytochrome b-c1 complex) that is part of the mitochondrial respiratory chain. The b-c1 complex mediates electron transfer from ubiquinol to cytochrome c. Contributes to the generation of a proton gradient across the mitochondrial membrane that is then used for ATP synthesis.</text>
</comment>
<comment type="cofactor">
    <cofactor evidence="2">
        <name>heme b</name>
        <dbReference type="ChEBI" id="CHEBI:60344"/>
    </cofactor>
    <text evidence="2">Binds 2 heme b groups non-covalently.</text>
</comment>
<comment type="subunit">
    <text evidence="2">The cytochrome bc1 complex contains 11 subunits: 3 respiratory subunits (MT-CYB, CYC1 and UQCRFS1), 2 core proteins (UQCRC1 and UQCRC2) and 6 low-molecular weight proteins (UQCRH/QCR6, UQCRB/QCR7, UQCRQ/QCR8, UQCR10/QCR9, UQCR11/QCR10 and a cleavage product of UQCRFS1). This cytochrome bc1 complex then forms a dimer.</text>
</comment>
<comment type="subcellular location">
    <subcellularLocation>
        <location evidence="2">Mitochondrion inner membrane</location>
        <topology evidence="2">Multi-pass membrane protein</topology>
    </subcellularLocation>
</comment>
<comment type="miscellaneous">
    <text evidence="1">Heme 1 (or BL or b562) is low-potential and absorbs at about 562 nm, and heme 2 (or BH or b566) is high-potential and absorbs at about 566 nm.</text>
</comment>
<comment type="similarity">
    <text evidence="3 4">Belongs to the cytochrome b family.</text>
</comment>
<comment type="caution">
    <text evidence="2">The full-length protein contains only eight transmembrane helices, not nine as predicted by bioinformatics tools.</text>
</comment>
<geneLocation type="mitochondrion"/>
<evidence type="ECO:0000250" key="1"/>
<evidence type="ECO:0000250" key="2">
    <source>
        <dbReference type="UniProtKB" id="P00157"/>
    </source>
</evidence>
<evidence type="ECO:0000255" key="3">
    <source>
        <dbReference type="PROSITE-ProRule" id="PRU00967"/>
    </source>
</evidence>
<evidence type="ECO:0000255" key="4">
    <source>
        <dbReference type="PROSITE-ProRule" id="PRU00968"/>
    </source>
</evidence>
<proteinExistence type="inferred from homology"/>
<protein>
    <recommendedName>
        <fullName>Cytochrome b</fullName>
    </recommendedName>
    <alternativeName>
        <fullName>Complex III subunit 3</fullName>
    </alternativeName>
    <alternativeName>
        <fullName>Complex III subunit III</fullName>
    </alternativeName>
    <alternativeName>
        <fullName>Cytochrome b-c1 complex subunit 3</fullName>
    </alternativeName>
    <alternativeName>
        <fullName>Ubiquinol-cytochrome-c reductase complex cytochrome b subunit</fullName>
    </alternativeName>
</protein>
<name>CYB_VULLA</name>
<organism>
    <name type="scientific">Vulpes lagopus</name>
    <name type="common">Arctic fox</name>
    <name type="synonym">Alopex lagopus</name>
    <dbReference type="NCBI Taxonomy" id="494514"/>
    <lineage>
        <taxon>Eukaryota</taxon>
        <taxon>Metazoa</taxon>
        <taxon>Chordata</taxon>
        <taxon>Craniata</taxon>
        <taxon>Vertebrata</taxon>
        <taxon>Euteleostomi</taxon>
        <taxon>Mammalia</taxon>
        <taxon>Eutheria</taxon>
        <taxon>Laurasiatheria</taxon>
        <taxon>Carnivora</taxon>
        <taxon>Caniformia</taxon>
        <taxon>Canidae</taxon>
        <taxon>Vulpes</taxon>
    </lineage>
</organism>
<feature type="chain" id="PRO_0000254773" description="Cytochrome b">
    <location>
        <begin position="1"/>
        <end position="379"/>
    </location>
</feature>
<feature type="transmembrane region" description="Helical" evidence="2">
    <location>
        <begin position="33"/>
        <end position="53"/>
    </location>
</feature>
<feature type="transmembrane region" description="Helical" evidence="2">
    <location>
        <begin position="77"/>
        <end position="98"/>
    </location>
</feature>
<feature type="transmembrane region" description="Helical" evidence="2">
    <location>
        <begin position="113"/>
        <end position="133"/>
    </location>
</feature>
<feature type="transmembrane region" description="Helical" evidence="2">
    <location>
        <begin position="178"/>
        <end position="198"/>
    </location>
</feature>
<feature type="transmembrane region" description="Helical" evidence="2">
    <location>
        <begin position="226"/>
        <end position="246"/>
    </location>
</feature>
<feature type="transmembrane region" description="Helical" evidence="2">
    <location>
        <begin position="288"/>
        <end position="308"/>
    </location>
</feature>
<feature type="transmembrane region" description="Helical" evidence="2">
    <location>
        <begin position="320"/>
        <end position="340"/>
    </location>
</feature>
<feature type="transmembrane region" description="Helical" evidence="2">
    <location>
        <begin position="347"/>
        <end position="367"/>
    </location>
</feature>
<feature type="binding site" description="axial binding residue" evidence="2">
    <location>
        <position position="83"/>
    </location>
    <ligand>
        <name>heme b</name>
        <dbReference type="ChEBI" id="CHEBI:60344"/>
        <label>b562</label>
    </ligand>
    <ligandPart>
        <name>Fe</name>
        <dbReference type="ChEBI" id="CHEBI:18248"/>
    </ligandPart>
</feature>
<feature type="binding site" description="axial binding residue" evidence="2">
    <location>
        <position position="97"/>
    </location>
    <ligand>
        <name>heme b</name>
        <dbReference type="ChEBI" id="CHEBI:60344"/>
        <label>b566</label>
    </ligand>
    <ligandPart>
        <name>Fe</name>
        <dbReference type="ChEBI" id="CHEBI:18248"/>
    </ligandPart>
</feature>
<feature type="binding site" description="axial binding residue" evidence="2">
    <location>
        <position position="182"/>
    </location>
    <ligand>
        <name>heme b</name>
        <dbReference type="ChEBI" id="CHEBI:60344"/>
        <label>b562</label>
    </ligand>
    <ligandPart>
        <name>Fe</name>
        <dbReference type="ChEBI" id="CHEBI:18248"/>
    </ligandPart>
</feature>
<feature type="binding site" description="axial binding residue" evidence="2">
    <location>
        <position position="196"/>
    </location>
    <ligand>
        <name>heme b</name>
        <dbReference type="ChEBI" id="CHEBI:60344"/>
        <label>b566</label>
    </ligand>
    <ligandPart>
        <name>Fe</name>
        <dbReference type="ChEBI" id="CHEBI:18248"/>
    </ligandPart>
</feature>
<feature type="binding site" evidence="2">
    <location>
        <position position="201"/>
    </location>
    <ligand>
        <name>a ubiquinone</name>
        <dbReference type="ChEBI" id="CHEBI:16389"/>
    </ligand>
</feature>
<dbReference type="EMBL" id="AY598511">
    <property type="protein sequence ID" value="AAU00457.1"/>
    <property type="molecule type" value="Genomic_DNA"/>
</dbReference>
<dbReference type="SMR" id="Q3L6X7"/>
<dbReference type="GO" id="GO:0005743">
    <property type="term" value="C:mitochondrial inner membrane"/>
    <property type="evidence" value="ECO:0007669"/>
    <property type="project" value="UniProtKB-SubCell"/>
</dbReference>
<dbReference type="GO" id="GO:0045275">
    <property type="term" value="C:respiratory chain complex III"/>
    <property type="evidence" value="ECO:0007669"/>
    <property type="project" value="InterPro"/>
</dbReference>
<dbReference type="GO" id="GO:0046872">
    <property type="term" value="F:metal ion binding"/>
    <property type="evidence" value="ECO:0007669"/>
    <property type="project" value="UniProtKB-KW"/>
</dbReference>
<dbReference type="GO" id="GO:0008121">
    <property type="term" value="F:ubiquinol-cytochrome-c reductase activity"/>
    <property type="evidence" value="ECO:0007669"/>
    <property type="project" value="InterPro"/>
</dbReference>
<dbReference type="GO" id="GO:0006122">
    <property type="term" value="P:mitochondrial electron transport, ubiquinol to cytochrome c"/>
    <property type="evidence" value="ECO:0007669"/>
    <property type="project" value="TreeGrafter"/>
</dbReference>
<dbReference type="CDD" id="cd00290">
    <property type="entry name" value="cytochrome_b_C"/>
    <property type="match status" value="1"/>
</dbReference>
<dbReference type="CDD" id="cd00284">
    <property type="entry name" value="Cytochrome_b_N"/>
    <property type="match status" value="1"/>
</dbReference>
<dbReference type="FunFam" id="1.20.810.10:FF:000002">
    <property type="entry name" value="Cytochrome b"/>
    <property type="match status" value="1"/>
</dbReference>
<dbReference type="Gene3D" id="1.20.810.10">
    <property type="entry name" value="Cytochrome Bc1 Complex, Chain C"/>
    <property type="match status" value="1"/>
</dbReference>
<dbReference type="InterPro" id="IPR005798">
    <property type="entry name" value="Cyt_b/b6_C"/>
</dbReference>
<dbReference type="InterPro" id="IPR036150">
    <property type="entry name" value="Cyt_b/b6_C_sf"/>
</dbReference>
<dbReference type="InterPro" id="IPR005797">
    <property type="entry name" value="Cyt_b/b6_N"/>
</dbReference>
<dbReference type="InterPro" id="IPR027387">
    <property type="entry name" value="Cytb/b6-like_sf"/>
</dbReference>
<dbReference type="InterPro" id="IPR030689">
    <property type="entry name" value="Cytochrome_b"/>
</dbReference>
<dbReference type="InterPro" id="IPR048260">
    <property type="entry name" value="Cytochrome_b_C_euk/bac"/>
</dbReference>
<dbReference type="InterPro" id="IPR048259">
    <property type="entry name" value="Cytochrome_b_N_euk/bac"/>
</dbReference>
<dbReference type="InterPro" id="IPR016174">
    <property type="entry name" value="Di-haem_cyt_TM"/>
</dbReference>
<dbReference type="PANTHER" id="PTHR19271">
    <property type="entry name" value="CYTOCHROME B"/>
    <property type="match status" value="1"/>
</dbReference>
<dbReference type="PANTHER" id="PTHR19271:SF16">
    <property type="entry name" value="CYTOCHROME B"/>
    <property type="match status" value="1"/>
</dbReference>
<dbReference type="Pfam" id="PF00032">
    <property type="entry name" value="Cytochrom_B_C"/>
    <property type="match status" value="1"/>
</dbReference>
<dbReference type="Pfam" id="PF00033">
    <property type="entry name" value="Cytochrome_B"/>
    <property type="match status" value="1"/>
</dbReference>
<dbReference type="PIRSF" id="PIRSF038885">
    <property type="entry name" value="COB"/>
    <property type="match status" value="1"/>
</dbReference>
<dbReference type="SUPFAM" id="SSF81648">
    <property type="entry name" value="a domain/subunit of cytochrome bc1 complex (Ubiquinol-cytochrome c reductase)"/>
    <property type="match status" value="1"/>
</dbReference>
<dbReference type="SUPFAM" id="SSF81342">
    <property type="entry name" value="Transmembrane di-heme cytochromes"/>
    <property type="match status" value="1"/>
</dbReference>
<dbReference type="PROSITE" id="PS51003">
    <property type="entry name" value="CYTB_CTER"/>
    <property type="match status" value="1"/>
</dbReference>
<dbReference type="PROSITE" id="PS51002">
    <property type="entry name" value="CYTB_NTER"/>
    <property type="match status" value="1"/>
</dbReference>
<gene>
    <name type="primary">MT-CYB</name>
    <name type="synonym">COB</name>
    <name type="synonym">CYTB</name>
    <name type="synonym">MTCYB</name>
</gene>
<reference key="1">
    <citation type="journal article" date="2005" name="Mol. Phylogenet. Evol.">
        <title>A phylogeny of the Caniformia (order Carnivora) based on 12 complete protein-coding mitochondrial genes.</title>
        <authorList>
            <person name="Delisle I."/>
            <person name="Strobeck C."/>
        </authorList>
    </citation>
    <scope>NUCLEOTIDE SEQUENCE [GENOMIC DNA]</scope>
</reference>
<sequence>MTNIRKTHPLAKIVNDSFIDLPAPSNISAWWNFGSLLGVCLILQIMTGLFLAMHYTSDTATAFSSVTHICRDVNYGWIIRYMHANGASMFFICLFMHVGRGLYYGSYVFMETWNVGIILLFATMATAFMGYVLPWGQMSFWGATVITNLLSAIPYIGTNLVEWIWGGFSVDKATLTRFFAFHFIFPFIIAALAMVHLLFLHETGSNNPSGITSDSDKIPFHPYYTIKDILGILLLLSVLMSLVLFSPDLLGDPDNYTPANPLNTPPHIKPEWYFLFAYAILRSIPNKLGGVLALVFSILILALIPHLHTSKQRGMMFRPLSQCLFWLLTADLLTLTWIGGQPVEHPFIVIGQIASILYFAILLILMPTISIIENNLLKW</sequence>